<organism>
    <name type="scientific">Microcystis aeruginosa (strain NIES-843 / IAM M-2473)</name>
    <dbReference type="NCBI Taxonomy" id="449447"/>
    <lineage>
        <taxon>Bacteria</taxon>
        <taxon>Bacillati</taxon>
        <taxon>Cyanobacteriota</taxon>
        <taxon>Cyanophyceae</taxon>
        <taxon>Oscillatoriophycideae</taxon>
        <taxon>Chroococcales</taxon>
        <taxon>Microcystaceae</taxon>
        <taxon>Microcystis</taxon>
    </lineage>
</organism>
<comment type="function">
    <text evidence="1">Catalyzes the condensation of iminoaspartate with dihydroxyacetone phosphate to form quinolinate.</text>
</comment>
<comment type="catalytic activity">
    <reaction evidence="1">
        <text>iminosuccinate + dihydroxyacetone phosphate = quinolinate + phosphate + 2 H2O + H(+)</text>
        <dbReference type="Rhea" id="RHEA:25888"/>
        <dbReference type="ChEBI" id="CHEBI:15377"/>
        <dbReference type="ChEBI" id="CHEBI:15378"/>
        <dbReference type="ChEBI" id="CHEBI:29959"/>
        <dbReference type="ChEBI" id="CHEBI:43474"/>
        <dbReference type="ChEBI" id="CHEBI:57642"/>
        <dbReference type="ChEBI" id="CHEBI:77875"/>
        <dbReference type="EC" id="2.5.1.72"/>
    </reaction>
    <physiologicalReaction direction="left-to-right" evidence="1">
        <dbReference type="Rhea" id="RHEA:25889"/>
    </physiologicalReaction>
</comment>
<comment type="cofactor">
    <cofactor evidence="1">
        <name>[4Fe-4S] cluster</name>
        <dbReference type="ChEBI" id="CHEBI:49883"/>
    </cofactor>
    <text evidence="1">Binds 1 [4Fe-4S] cluster per subunit.</text>
</comment>
<comment type="pathway">
    <text evidence="1">Cofactor biosynthesis; NAD(+) biosynthesis; quinolinate from iminoaspartate: step 1/1.</text>
</comment>
<comment type="subcellular location">
    <subcellularLocation>
        <location evidence="1">Cytoplasm</location>
    </subcellularLocation>
</comment>
<comment type="similarity">
    <text evidence="1">Belongs to the quinolinate synthase family. Type 2 subfamily.</text>
</comment>
<accession>B0JLU4</accession>
<evidence type="ECO:0000255" key="1">
    <source>
        <dbReference type="HAMAP-Rule" id="MF_00568"/>
    </source>
</evidence>
<gene>
    <name evidence="1" type="primary">nadA</name>
    <name type="ordered locus">MAE_32960</name>
</gene>
<name>NADA_MICAN</name>
<dbReference type="EC" id="2.5.1.72" evidence="1"/>
<dbReference type="EMBL" id="AP009552">
    <property type="protein sequence ID" value="BAG03118.1"/>
    <property type="molecule type" value="Genomic_DNA"/>
</dbReference>
<dbReference type="RefSeq" id="WP_002798469.1">
    <property type="nucleotide sequence ID" value="NC_010296.1"/>
</dbReference>
<dbReference type="SMR" id="B0JLU4"/>
<dbReference type="STRING" id="449447.MAE_32960"/>
<dbReference type="PaxDb" id="449447-MAE_32960"/>
<dbReference type="EnsemblBacteria" id="BAG03118">
    <property type="protein sequence ID" value="BAG03118"/>
    <property type="gene ID" value="MAE_32960"/>
</dbReference>
<dbReference type="KEGG" id="mar:MAE_32960"/>
<dbReference type="eggNOG" id="COG0379">
    <property type="taxonomic scope" value="Bacteria"/>
</dbReference>
<dbReference type="HOGENOM" id="CLU_047382_0_0_3"/>
<dbReference type="BioCyc" id="MAER449447:MAE_RS14260-MONOMER"/>
<dbReference type="UniPathway" id="UPA00253">
    <property type="reaction ID" value="UER00327"/>
</dbReference>
<dbReference type="Proteomes" id="UP000001510">
    <property type="component" value="Chromosome"/>
</dbReference>
<dbReference type="GO" id="GO:0005829">
    <property type="term" value="C:cytosol"/>
    <property type="evidence" value="ECO:0007669"/>
    <property type="project" value="TreeGrafter"/>
</dbReference>
<dbReference type="GO" id="GO:0051539">
    <property type="term" value="F:4 iron, 4 sulfur cluster binding"/>
    <property type="evidence" value="ECO:0007669"/>
    <property type="project" value="UniProtKB-KW"/>
</dbReference>
<dbReference type="GO" id="GO:0046872">
    <property type="term" value="F:metal ion binding"/>
    <property type="evidence" value="ECO:0007669"/>
    <property type="project" value="UniProtKB-KW"/>
</dbReference>
<dbReference type="GO" id="GO:0008987">
    <property type="term" value="F:quinolinate synthetase A activity"/>
    <property type="evidence" value="ECO:0007669"/>
    <property type="project" value="UniProtKB-UniRule"/>
</dbReference>
<dbReference type="GO" id="GO:0034628">
    <property type="term" value="P:'de novo' NAD biosynthetic process from L-aspartate"/>
    <property type="evidence" value="ECO:0007669"/>
    <property type="project" value="TreeGrafter"/>
</dbReference>
<dbReference type="FunFam" id="3.40.50.10800:FF:000003">
    <property type="entry name" value="Quinolinate synthase A"/>
    <property type="match status" value="1"/>
</dbReference>
<dbReference type="Gene3D" id="3.40.50.10800">
    <property type="entry name" value="NadA-like"/>
    <property type="match status" value="3"/>
</dbReference>
<dbReference type="HAMAP" id="MF_00568">
    <property type="entry name" value="NadA_type2"/>
    <property type="match status" value="1"/>
</dbReference>
<dbReference type="InterPro" id="IPR003473">
    <property type="entry name" value="NadA"/>
</dbReference>
<dbReference type="InterPro" id="IPR036094">
    <property type="entry name" value="NadA_sf"/>
</dbReference>
<dbReference type="InterPro" id="IPR023066">
    <property type="entry name" value="Quinolinate_synth_type2"/>
</dbReference>
<dbReference type="NCBIfam" id="TIGR00550">
    <property type="entry name" value="nadA"/>
    <property type="match status" value="1"/>
</dbReference>
<dbReference type="NCBIfam" id="NF006878">
    <property type="entry name" value="PRK09375.1-2"/>
    <property type="match status" value="1"/>
</dbReference>
<dbReference type="NCBIfam" id="NF006879">
    <property type="entry name" value="PRK09375.1-4"/>
    <property type="match status" value="1"/>
</dbReference>
<dbReference type="PANTHER" id="PTHR30573:SF0">
    <property type="entry name" value="QUINOLINATE SYNTHASE, CHLOROPLASTIC"/>
    <property type="match status" value="1"/>
</dbReference>
<dbReference type="PANTHER" id="PTHR30573">
    <property type="entry name" value="QUINOLINATE SYNTHETASE A"/>
    <property type="match status" value="1"/>
</dbReference>
<dbReference type="Pfam" id="PF02445">
    <property type="entry name" value="NadA"/>
    <property type="match status" value="1"/>
</dbReference>
<dbReference type="SUPFAM" id="SSF142754">
    <property type="entry name" value="NadA-like"/>
    <property type="match status" value="1"/>
</dbReference>
<proteinExistence type="inferred from homology"/>
<reference key="1">
    <citation type="journal article" date="2007" name="DNA Res.">
        <title>Complete genomic structure of the bloom-forming toxic cyanobacterium Microcystis aeruginosa NIES-843.</title>
        <authorList>
            <person name="Kaneko T."/>
            <person name="Nakajima N."/>
            <person name="Okamoto S."/>
            <person name="Suzuki I."/>
            <person name="Tanabe Y."/>
            <person name="Tamaoki M."/>
            <person name="Nakamura Y."/>
            <person name="Kasai F."/>
            <person name="Watanabe A."/>
            <person name="Kawashima K."/>
            <person name="Kishida Y."/>
            <person name="Ono A."/>
            <person name="Shimizu Y."/>
            <person name="Takahashi C."/>
            <person name="Minami C."/>
            <person name="Fujishiro T."/>
            <person name="Kohara M."/>
            <person name="Katoh M."/>
            <person name="Nakazaki N."/>
            <person name="Nakayama S."/>
            <person name="Yamada M."/>
            <person name="Tabata S."/>
            <person name="Watanabe M.M."/>
        </authorList>
    </citation>
    <scope>NUCLEOTIDE SEQUENCE [LARGE SCALE GENOMIC DNA]</scope>
    <source>
        <strain>NIES-843 / IAM M-247</strain>
    </source>
</reference>
<sequence>MFTTVQPTNRSSLPDDLFTAIKELKRELNAVILAHYYQNSDIQDIADYIGDSLGLSQQAARTPADVIVFAGVHFMAETAKILNPDKLVLLPDLDAGCSLADSCHPEDFARFKAQYPDHIVISYINCSAEIKAMSDIICTSSNAVKIVNQIPAHQPIIFAPDRNLGRYVSQQTGRDLVLWQGSCIVHETFSERKIIELKVAHPEAKIIAHPECEASVLRHADYIGSTTALLNYSLKSSEKTFIVATEPGIIHQMQKSAPEKLFIPAPALNNCACNECPYMRLNTLEKLYLCMRDKTPEITISEDLRVKALLPIQRMLEMS</sequence>
<keyword id="KW-0004">4Fe-4S</keyword>
<keyword id="KW-0963">Cytoplasm</keyword>
<keyword id="KW-0408">Iron</keyword>
<keyword id="KW-0411">Iron-sulfur</keyword>
<keyword id="KW-0479">Metal-binding</keyword>
<keyword id="KW-0662">Pyridine nucleotide biosynthesis</keyword>
<keyword id="KW-0808">Transferase</keyword>
<protein>
    <recommendedName>
        <fullName evidence="1">Quinolinate synthase</fullName>
        <ecNumber evidence="1">2.5.1.72</ecNumber>
    </recommendedName>
</protein>
<feature type="chain" id="PRO_1000129438" description="Quinolinate synthase">
    <location>
        <begin position="1"/>
        <end position="319"/>
    </location>
</feature>
<feature type="binding site" evidence="1">
    <location>
        <position position="35"/>
    </location>
    <ligand>
        <name>iminosuccinate</name>
        <dbReference type="ChEBI" id="CHEBI:77875"/>
    </ligand>
</feature>
<feature type="binding site" evidence="1">
    <location>
        <position position="52"/>
    </location>
    <ligand>
        <name>iminosuccinate</name>
        <dbReference type="ChEBI" id="CHEBI:77875"/>
    </ligand>
</feature>
<feature type="binding site" evidence="1">
    <location>
        <position position="97"/>
    </location>
    <ligand>
        <name>[4Fe-4S] cluster</name>
        <dbReference type="ChEBI" id="CHEBI:49883"/>
    </ligand>
</feature>
<feature type="binding site" evidence="1">
    <location>
        <begin position="123"/>
        <end position="125"/>
    </location>
    <ligand>
        <name>iminosuccinate</name>
        <dbReference type="ChEBI" id="CHEBI:77875"/>
    </ligand>
</feature>
<feature type="binding site" evidence="1">
    <location>
        <position position="140"/>
    </location>
    <ligand>
        <name>iminosuccinate</name>
        <dbReference type="ChEBI" id="CHEBI:77875"/>
    </ligand>
</feature>
<feature type="binding site" evidence="1">
    <location>
        <position position="183"/>
    </location>
    <ligand>
        <name>[4Fe-4S] cluster</name>
        <dbReference type="ChEBI" id="CHEBI:49883"/>
    </ligand>
</feature>
<feature type="binding site" evidence="1">
    <location>
        <begin position="209"/>
        <end position="211"/>
    </location>
    <ligand>
        <name>iminosuccinate</name>
        <dbReference type="ChEBI" id="CHEBI:77875"/>
    </ligand>
</feature>
<feature type="binding site" evidence="1">
    <location>
        <position position="226"/>
    </location>
    <ligand>
        <name>iminosuccinate</name>
        <dbReference type="ChEBI" id="CHEBI:77875"/>
    </ligand>
</feature>
<feature type="binding site" evidence="1">
    <location>
        <position position="276"/>
    </location>
    <ligand>
        <name>[4Fe-4S] cluster</name>
        <dbReference type="ChEBI" id="CHEBI:49883"/>
    </ligand>
</feature>